<keyword id="KW-0067">ATP-binding</keyword>
<keyword id="KW-0963">Cytoplasm</keyword>
<keyword id="KW-0436">Ligase</keyword>
<keyword id="KW-0460">Magnesium</keyword>
<keyword id="KW-0479">Metal-binding</keyword>
<keyword id="KW-0547">Nucleotide-binding</keyword>
<keyword id="KW-0658">Purine biosynthesis</keyword>
<dbReference type="EC" id="6.3.5.3" evidence="1"/>
<dbReference type="EMBL" id="CP000283">
    <property type="protein sequence ID" value="ABE38988.1"/>
    <property type="molecule type" value="Genomic_DNA"/>
</dbReference>
<dbReference type="SMR" id="Q13AA1"/>
<dbReference type="STRING" id="316057.RPD_1752"/>
<dbReference type="KEGG" id="rpd:RPD_1752"/>
<dbReference type="eggNOG" id="COG0046">
    <property type="taxonomic scope" value="Bacteria"/>
</dbReference>
<dbReference type="HOGENOM" id="CLU_003100_0_1_5"/>
<dbReference type="BioCyc" id="RPAL316057:RPD_RS08815-MONOMER"/>
<dbReference type="UniPathway" id="UPA00074">
    <property type="reaction ID" value="UER00128"/>
</dbReference>
<dbReference type="Proteomes" id="UP000001818">
    <property type="component" value="Chromosome"/>
</dbReference>
<dbReference type="GO" id="GO:0005737">
    <property type="term" value="C:cytoplasm"/>
    <property type="evidence" value="ECO:0007669"/>
    <property type="project" value="UniProtKB-SubCell"/>
</dbReference>
<dbReference type="GO" id="GO:0005524">
    <property type="term" value="F:ATP binding"/>
    <property type="evidence" value="ECO:0007669"/>
    <property type="project" value="UniProtKB-UniRule"/>
</dbReference>
<dbReference type="GO" id="GO:0000287">
    <property type="term" value="F:magnesium ion binding"/>
    <property type="evidence" value="ECO:0007669"/>
    <property type="project" value="UniProtKB-UniRule"/>
</dbReference>
<dbReference type="GO" id="GO:0004642">
    <property type="term" value="F:phosphoribosylformylglycinamidine synthase activity"/>
    <property type="evidence" value="ECO:0007669"/>
    <property type="project" value="UniProtKB-UniRule"/>
</dbReference>
<dbReference type="GO" id="GO:0006189">
    <property type="term" value="P:'de novo' IMP biosynthetic process"/>
    <property type="evidence" value="ECO:0007669"/>
    <property type="project" value="UniProtKB-UniRule"/>
</dbReference>
<dbReference type="CDD" id="cd02203">
    <property type="entry name" value="PurL_repeat1"/>
    <property type="match status" value="1"/>
</dbReference>
<dbReference type="CDD" id="cd02204">
    <property type="entry name" value="PurL_repeat2"/>
    <property type="match status" value="1"/>
</dbReference>
<dbReference type="FunFam" id="3.30.1330.10:FF:000004">
    <property type="entry name" value="Phosphoribosylformylglycinamidine synthase subunit PurL"/>
    <property type="match status" value="1"/>
</dbReference>
<dbReference type="Gene3D" id="3.90.650.10">
    <property type="entry name" value="PurM-like C-terminal domain"/>
    <property type="match status" value="2"/>
</dbReference>
<dbReference type="Gene3D" id="3.30.1330.10">
    <property type="entry name" value="PurM-like, N-terminal domain"/>
    <property type="match status" value="2"/>
</dbReference>
<dbReference type="HAMAP" id="MF_00420">
    <property type="entry name" value="PurL_2"/>
    <property type="match status" value="1"/>
</dbReference>
<dbReference type="InterPro" id="IPR010074">
    <property type="entry name" value="PRibForGlyAmidine_synth_PurL"/>
</dbReference>
<dbReference type="InterPro" id="IPR041609">
    <property type="entry name" value="PurL_linker"/>
</dbReference>
<dbReference type="InterPro" id="IPR010918">
    <property type="entry name" value="PurM-like_C_dom"/>
</dbReference>
<dbReference type="InterPro" id="IPR036676">
    <property type="entry name" value="PurM-like_C_sf"/>
</dbReference>
<dbReference type="InterPro" id="IPR016188">
    <property type="entry name" value="PurM-like_N"/>
</dbReference>
<dbReference type="InterPro" id="IPR036921">
    <property type="entry name" value="PurM-like_N_sf"/>
</dbReference>
<dbReference type="NCBIfam" id="TIGR01736">
    <property type="entry name" value="FGAM_synth_II"/>
    <property type="match status" value="1"/>
</dbReference>
<dbReference type="NCBIfam" id="NF002290">
    <property type="entry name" value="PRK01213.1"/>
    <property type="match status" value="1"/>
</dbReference>
<dbReference type="PANTHER" id="PTHR43555">
    <property type="entry name" value="PHOSPHORIBOSYLFORMYLGLYCINAMIDINE SYNTHASE SUBUNIT PURL"/>
    <property type="match status" value="1"/>
</dbReference>
<dbReference type="PANTHER" id="PTHR43555:SF1">
    <property type="entry name" value="PHOSPHORIBOSYLFORMYLGLYCINAMIDINE SYNTHASE SUBUNIT PURL"/>
    <property type="match status" value="1"/>
</dbReference>
<dbReference type="Pfam" id="PF00586">
    <property type="entry name" value="AIRS"/>
    <property type="match status" value="2"/>
</dbReference>
<dbReference type="Pfam" id="PF02769">
    <property type="entry name" value="AIRS_C"/>
    <property type="match status" value="2"/>
</dbReference>
<dbReference type="Pfam" id="PF18072">
    <property type="entry name" value="FGAR-AT_linker"/>
    <property type="match status" value="1"/>
</dbReference>
<dbReference type="PIRSF" id="PIRSF001587">
    <property type="entry name" value="FGAM_synthase_II"/>
    <property type="match status" value="1"/>
</dbReference>
<dbReference type="SUPFAM" id="SSF56042">
    <property type="entry name" value="PurM C-terminal domain-like"/>
    <property type="match status" value="2"/>
</dbReference>
<dbReference type="SUPFAM" id="SSF55326">
    <property type="entry name" value="PurM N-terminal domain-like"/>
    <property type="match status" value="2"/>
</dbReference>
<feature type="chain" id="PRO_1000050344" description="Phosphoribosylformylglycinamidine synthase subunit PurL">
    <location>
        <begin position="1"/>
        <end position="736"/>
    </location>
</feature>
<feature type="active site" evidence="1">
    <location>
        <position position="49"/>
    </location>
</feature>
<feature type="active site" description="Proton acceptor" evidence="1">
    <location>
        <position position="95"/>
    </location>
</feature>
<feature type="binding site" evidence="1">
    <location>
        <position position="52"/>
    </location>
    <ligand>
        <name>ATP</name>
        <dbReference type="ChEBI" id="CHEBI:30616"/>
    </ligand>
</feature>
<feature type="binding site" evidence="1">
    <location>
        <position position="91"/>
    </location>
    <ligand>
        <name>ATP</name>
        <dbReference type="ChEBI" id="CHEBI:30616"/>
    </ligand>
</feature>
<feature type="binding site" evidence="1">
    <location>
        <position position="93"/>
    </location>
    <ligand>
        <name>Mg(2+)</name>
        <dbReference type="ChEBI" id="CHEBI:18420"/>
        <label>1</label>
    </ligand>
</feature>
<feature type="binding site" evidence="1">
    <location>
        <begin position="94"/>
        <end position="97"/>
    </location>
    <ligand>
        <name>substrate</name>
    </ligand>
</feature>
<feature type="binding site" evidence="1">
    <location>
        <position position="116"/>
    </location>
    <ligand>
        <name>substrate</name>
    </ligand>
</feature>
<feature type="binding site" evidence="1">
    <location>
        <position position="117"/>
    </location>
    <ligand>
        <name>Mg(2+)</name>
        <dbReference type="ChEBI" id="CHEBI:18420"/>
        <label>2</label>
    </ligand>
</feature>
<feature type="binding site" evidence="1">
    <location>
        <position position="240"/>
    </location>
    <ligand>
        <name>substrate</name>
    </ligand>
</feature>
<feature type="binding site" evidence="1">
    <location>
        <position position="268"/>
    </location>
    <ligand>
        <name>Mg(2+)</name>
        <dbReference type="ChEBI" id="CHEBI:18420"/>
        <label>2</label>
    </ligand>
</feature>
<feature type="binding site" evidence="1">
    <location>
        <begin position="312"/>
        <end position="314"/>
    </location>
    <ligand>
        <name>substrate</name>
    </ligand>
</feature>
<feature type="binding site" evidence="1">
    <location>
        <position position="493"/>
    </location>
    <ligand>
        <name>ATP</name>
        <dbReference type="ChEBI" id="CHEBI:30616"/>
    </ligand>
</feature>
<feature type="binding site" evidence="1">
    <location>
        <position position="530"/>
    </location>
    <ligand>
        <name>ATP</name>
        <dbReference type="ChEBI" id="CHEBI:30616"/>
    </ligand>
</feature>
<feature type="binding site" evidence="1">
    <location>
        <position position="531"/>
    </location>
    <ligand>
        <name>Mg(2+)</name>
        <dbReference type="ChEBI" id="CHEBI:18420"/>
        <label>1</label>
    </ligand>
</feature>
<feature type="binding site" evidence="1">
    <location>
        <position position="533"/>
    </location>
    <ligand>
        <name>substrate</name>
    </ligand>
</feature>
<accession>Q13AA1</accession>
<gene>
    <name evidence="1" type="primary">purL</name>
    <name type="ordered locus">RPD_1752</name>
</gene>
<comment type="function">
    <text evidence="1">Part of the phosphoribosylformylglycinamidine synthase complex involved in the purines biosynthetic pathway. Catalyzes the ATP-dependent conversion of formylglycinamide ribonucleotide (FGAR) and glutamine to yield formylglycinamidine ribonucleotide (FGAM) and glutamate. The FGAM synthase complex is composed of three subunits. PurQ produces an ammonia molecule by converting glutamine to glutamate. PurL transfers the ammonia molecule to FGAR to form FGAM in an ATP-dependent manner. PurS interacts with PurQ and PurL and is thought to assist in the transfer of the ammonia molecule from PurQ to PurL.</text>
</comment>
<comment type="catalytic activity">
    <reaction evidence="1">
        <text>N(2)-formyl-N(1)-(5-phospho-beta-D-ribosyl)glycinamide + L-glutamine + ATP + H2O = 2-formamido-N(1)-(5-O-phospho-beta-D-ribosyl)acetamidine + L-glutamate + ADP + phosphate + H(+)</text>
        <dbReference type="Rhea" id="RHEA:17129"/>
        <dbReference type="ChEBI" id="CHEBI:15377"/>
        <dbReference type="ChEBI" id="CHEBI:15378"/>
        <dbReference type="ChEBI" id="CHEBI:29985"/>
        <dbReference type="ChEBI" id="CHEBI:30616"/>
        <dbReference type="ChEBI" id="CHEBI:43474"/>
        <dbReference type="ChEBI" id="CHEBI:58359"/>
        <dbReference type="ChEBI" id="CHEBI:147286"/>
        <dbReference type="ChEBI" id="CHEBI:147287"/>
        <dbReference type="ChEBI" id="CHEBI:456216"/>
        <dbReference type="EC" id="6.3.5.3"/>
    </reaction>
</comment>
<comment type="pathway">
    <text evidence="1">Purine metabolism; IMP biosynthesis via de novo pathway; 5-amino-1-(5-phospho-D-ribosyl)imidazole from N(2)-formyl-N(1)-(5-phospho-D-ribosyl)glycinamide: step 1/2.</text>
</comment>
<comment type="subunit">
    <text evidence="1">Monomer. Part of the FGAM synthase complex composed of 1 PurL, 1 PurQ and 2 PurS subunits.</text>
</comment>
<comment type="subcellular location">
    <subcellularLocation>
        <location evidence="1">Cytoplasm</location>
    </subcellularLocation>
</comment>
<comment type="similarity">
    <text evidence="1">Belongs to the FGAMS family.</text>
</comment>
<reference key="1">
    <citation type="submission" date="2006-03" db="EMBL/GenBank/DDBJ databases">
        <title>Complete sequence of Rhodopseudomonas palustris BisB5.</title>
        <authorList>
            <consortium name="US DOE Joint Genome Institute"/>
            <person name="Copeland A."/>
            <person name="Lucas S."/>
            <person name="Lapidus A."/>
            <person name="Barry K."/>
            <person name="Detter J.C."/>
            <person name="Glavina del Rio T."/>
            <person name="Hammon N."/>
            <person name="Israni S."/>
            <person name="Dalin E."/>
            <person name="Tice H."/>
            <person name="Pitluck S."/>
            <person name="Chain P."/>
            <person name="Malfatti S."/>
            <person name="Shin M."/>
            <person name="Vergez L."/>
            <person name="Schmutz J."/>
            <person name="Larimer F."/>
            <person name="Land M."/>
            <person name="Hauser L."/>
            <person name="Pelletier D.A."/>
            <person name="Kyrpides N."/>
            <person name="Lykidis A."/>
            <person name="Oda Y."/>
            <person name="Harwood C.S."/>
            <person name="Richardson P."/>
        </authorList>
    </citation>
    <scope>NUCLEOTIDE SEQUENCE [LARGE SCALE GENOMIC DNA]</scope>
    <source>
        <strain>BisB5</strain>
    </source>
</reference>
<organism>
    <name type="scientific">Rhodopseudomonas palustris (strain BisB5)</name>
    <dbReference type="NCBI Taxonomy" id="316057"/>
    <lineage>
        <taxon>Bacteria</taxon>
        <taxon>Pseudomonadati</taxon>
        <taxon>Pseudomonadota</taxon>
        <taxon>Alphaproteobacteria</taxon>
        <taxon>Hyphomicrobiales</taxon>
        <taxon>Nitrobacteraceae</taxon>
        <taxon>Rhodopseudomonas</taxon>
    </lineage>
</organism>
<evidence type="ECO:0000255" key="1">
    <source>
        <dbReference type="HAMAP-Rule" id="MF_00420"/>
    </source>
</evidence>
<protein>
    <recommendedName>
        <fullName evidence="1">Phosphoribosylformylglycinamidine synthase subunit PurL</fullName>
        <shortName evidence="1">FGAM synthase</shortName>
        <ecNumber evidence="1">6.3.5.3</ecNumber>
    </recommendedName>
    <alternativeName>
        <fullName evidence="1">Formylglycinamide ribonucleotide amidotransferase subunit II</fullName>
        <shortName evidence="1">FGAR amidotransferase II</shortName>
        <shortName evidence="1">FGAR-AT II</shortName>
    </alternativeName>
    <alternativeName>
        <fullName evidence="1">Glutamine amidotransferase PurL</fullName>
    </alternativeName>
    <alternativeName>
        <fullName evidence="1">Phosphoribosylformylglycinamidine synthase subunit II</fullName>
    </alternativeName>
</protein>
<name>PURL_RHOPS</name>
<sequence length="736" mass="78589">MSAPEPKITPELVASHGLKPDEYQRILDLIGREPSFTELGIFSAMWNEHCSYKSSRIHLRGLPTKAPWVLQGPGENAGVIDIGDNQAVVFKMESHNHPSYIEPYQGATTGVGGILRDVFTMGARPIACLNALSFGAPEHPKTRHLVSGVVAGVGGYGNSFGVPTVGGQTRFHTRYDGNILVNAMAVGLADADKIFLAAASGVGMPIVYLGSKTGRDGMGGATMASAEFGEGSEEKRPTVQVGDPFAEKLLLEACLEIMANDCVIAIQDMGAAGLTCSAVEMGAKGDLGVDLDLDAVPTRETGMTAYEMMLSESQERMLMVLKPEKEKEAEAIFRKWGLDFAVVGYTTPTKRFVVKHGGKAMADLPIKELGDEAPLYDRPWVESPKLPVIHAREVNAPNSIADALEKLLATPDLCSKRWVWEQYDHVIGGNTLQRPGGDAAVVRVQDGPKGLALTVDVTPRYCEADPFEGGKQAVAEAWRNITAVGGKPLAITDNLNFGNPERPEIMGQFVGCLKGIAEACIAFDFPVVSGNVSLYNETSGRGILPTPSIGGVGLLDDFTKSATLAFKAEGEAILLIGETHGWLGQSVYLRDICGREEGAPPPVDLACEKRHGDVVRGMIHAGTATAVHDLSDGGLLVALAEMALAGSIGASLEAPPDGIVPHAWWFGEDQGRYLVTVKEDDLLTVLSKMKSVGVSCEQIGRTAGHTLKIEGERALDLKALRHAHEHWLPDYMGGKN</sequence>
<proteinExistence type="inferred from homology"/>